<keyword id="KW-0274">FAD</keyword>
<keyword id="KW-0285">Flavoprotein</keyword>
<keyword id="KW-0503">Monooxygenase</keyword>
<keyword id="KW-0560">Oxidoreductase</keyword>
<keyword id="KW-1185">Reference proteome</keyword>
<keyword id="KW-0732">Signal</keyword>
<feature type="signal peptide" evidence="2">
    <location>
        <begin position="1"/>
        <end position="32"/>
    </location>
</feature>
<feature type="chain" id="PRO_0000359961" description="Putative FAD-dependent monooxygenase YetM">
    <location>
        <begin position="33"/>
        <end position="369"/>
    </location>
</feature>
<feature type="binding site" evidence="1">
    <location>
        <position position="12"/>
    </location>
    <ligand>
        <name>FAD</name>
        <dbReference type="ChEBI" id="CHEBI:57692"/>
    </ligand>
</feature>
<feature type="binding site" evidence="1">
    <location>
        <begin position="31"/>
        <end position="32"/>
    </location>
    <ligand>
        <name>FAD</name>
        <dbReference type="ChEBI" id="CHEBI:57692"/>
    </ligand>
</feature>
<feature type="binding site" evidence="1">
    <location>
        <position position="126"/>
    </location>
    <ligand>
        <name>FAD</name>
        <dbReference type="ChEBI" id="CHEBI:57692"/>
    </ligand>
</feature>
<feature type="binding site" evidence="1">
    <location>
        <position position="285"/>
    </location>
    <ligand>
        <name>FAD</name>
        <dbReference type="ChEBI" id="CHEBI:57692"/>
    </ligand>
</feature>
<name>YETM_BACSU</name>
<gene>
    <name type="primary">yetM</name>
    <name type="synonym">yfnL</name>
    <name type="ordered locus">BSU07230</name>
</gene>
<sequence length="369" mass="40978">MKHMLIAGGGIGGLSAAISLRKAGFSVTLCEAASENRKTGAGILQPQNALAVLKELGVFEDCCKHGFQTEWFKTFDEQGNLLFQVSESFLDDSLPGRNNILRKTLNDILMKHAEAVGVDIKWGKKVVAYEETAESVTALCEDGEKMQADILAGFDGIHSVVRDKMLQKETEKEHLGMGAWRFYIELPDYTFEDATFMYRSGDTQIGVVPLAQHAGYVFVLQPCTSDYWDEEDTRFDRVKEILSGFRGLDFVTKHMSKQHPVIFNKLEQVAVQEPWHKGRVIIGGDAAHAGAPTLAQGAAMAIEDAIVLAEELQNHADHETALQAYYKRRAPRALKVQNLSSEIVRRRLKGEPGAEELIGECYAVLREGY</sequence>
<comment type="cofactor">
    <cofactor evidence="1">
        <name>FAD</name>
        <dbReference type="ChEBI" id="CHEBI:57692"/>
    </cofactor>
</comment>
<comment type="induction">
    <text evidence="3">Repressed by YetL (PubMed:19329649). Induced by several flavonoids (PubMed:19329649).</text>
</comment>
<reference key="1">
    <citation type="journal article" date="1997" name="Microbiology">
        <title>A 23.4 kb segment at the 69 degrees-70 degrees region of the Bacillus subtilis genome.</title>
        <authorList>
            <person name="Yamamoto H."/>
            <person name="Uchiyama S."/>
            <person name="Nugroho F.A."/>
            <person name="Sekiguchi J."/>
        </authorList>
    </citation>
    <scope>NUCLEOTIDE SEQUENCE [GENOMIC DNA]</scope>
    <source>
        <strain>168 / AC327</strain>
    </source>
</reference>
<reference key="2">
    <citation type="journal article" date="1997" name="Nature">
        <title>The complete genome sequence of the Gram-positive bacterium Bacillus subtilis.</title>
        <authorList>
            <person name="Kunst F."/>
            <person name="Ogasawara N."/>
            <person name="Moszer I."/>
            <person name="Albertini A.M."/>
            <person name="Alloni G."/>
            <person name="Azevedo V."/>
            <person name="Bertero M.G."/>
            <person name="Bessieres P."/>
            <person name="Bolotin A."/>
            <person name="Borchert S."/>
            <person name="Borriss R."/>
            <person name="Boursier L."/>
            <person name="Brans A."/>
            <person name="Braun M."/>
            <person name="Brignell S.C."/>
            <person name="Bron S."/>
            <person name="Brouillet S."/>
            <person name="Bruschi C.V."/>
            <person name="Caldwell B."/>
            <person name="Capuano V."/>
            <person name="Carter N.M."/>
            <person name="Choi S.-K."/>
            <person name="Codani J.-J."/>
            <person name="Connerton I.F."/>
            <person name="Cummings N.J."/>
            <person name="Daniel R.A."/>
            <person name="Denizot F."/>
            <person name="Devine K.M."/>
            <person name="Duesterhoeft A."/>
            <person name="Ehrlich S.D."/>
            <person name="Emmerson P.T."/>
            <person name="Entian K.-D."/>
            <person name="Errington J."/>
            <person name="Fabret C."/>
            <person name="Ferrari E."/>
            <person name="Foulger D."/>
            <person name="Fritz C."/>
            <person name="Fujita M."/>
            <person name="Fujita Y."/>
            <person name="Fuma S."/>
            <person name="Galizzi A."/>
            <person name="Galleron N."/>
            <person name="Ghim S.-Y."/>
            <person name="Glaser P."/>
            <person name="Goffeau A."/>
            <person name="Golightly E.J."/>
            <person name="Grandi G."/>
            <person name="Guiseppi G."/>
            <person name="Guy B.J."/>
            <person name="Haga K."/>
            <person name="Haiech J."/>
            <person name="Harwood C.R."/>
            <person name="Henaut A."/>
            <person name="Hilbert H."/>
            <person name="Holsappel S."/>
            <person name="Hosono S."/>
            <person name="Hullo M.-F."/>
            <person name="Itaya M."/>
            <person name="Jones L.-M."/>
            <person name="Joris B."/>
            <person name="Karamata D."/>
            <person name="Kasahara Y."/>
            <person name="Klaerr-Blanchard M."/>
            <person name="Klein C."/>
            <person name="Kobayashi Y."/>
            <person name="Koetter P."/>
            <person name="Koningstein G."/>
            <person name="Krogh S."/>
            <person name="Kumano M."/>
            <person name="Kurita K."/>
            <person name="Lapidus A."/>
            <person name="Lardinois S."/>
            <person name="Lauber J."/>
            <person name="Lazarevic V."/>
            <person name="Lee S.-M."/>
            <person name="Levine A."/>
            <person name="Liu H."/>
            <person name="Masuda S."/>
            <person name="Mauel C."/>
            <person name="Medigue C."/>
            <person name="Medina N."/>
            <person name="Mellado R.P."/>
            <person name="Mizuno M."/>
            <person name="Moestl D."/>
            <person name="Nakai S."/>
            <person name="Noback M."/>
            <person name="Noone D."/>
            <person name="O'Reilly M."/>
            <person name="Ogawa K."/>
            <person name="Ogiwara A."/>
            <person name="Oudega B."/>
            <person name="Park S.-H."/>
            <person name="Parro V."/>
            <person name="Pohl T.M."/>
            <person name="Portetelle D."/>
            <person name="Porwollik S."/>
            <person name="Prescott A.M."/>
            <person name="Presecan E."/>
            <person name="Pujic P."/>
            <person name="Purnelle B."/>
            <person name="Rapoport G."/>
            <person name="Rey M."/>
            <person name="Reynolds S."/>
            <person name="Rieger M."/>
            <person name="Rivolta C."/>
            <person name="Rocha E."/>
            <person name="Roche B."/>
            <person name="Rose M."/>
            <person name="Sadaie Y."/>
            <person name="Sato T."/>
            <person name="Scanlan E."/>
            <person name="Schleich S."/>
            <person name="Schroeter R."/>
            <person name="Scoffone F."/>
            <person name="Sekiguchi J."/>
            <person name="Sekowska A."/>
            <person name="Seror S.J."/>
            <person name="Serror P."/>
            <person name="Shin B.-S."/>
            <person name="Soldo B."/>
            <person name="Sorokin A."/>
            <person name="Tacconi E."/>
            <person name="Takagi T."/>
            <person name="Takahashi H."/>
            <person name="Takemaru K."/>
            <person name="Takeuchi M."/>
            <person name="Tamakoshi A."/>
            <person name="Tanaka T."/>
            <person name="Terpstra P."/>
            <person name="Tognoni A."/>
            <person name="Tosato V."/>
            <person name="Uchiyama S."/>
            <person name="Vandenbol M."/>
            <person name="Vannier F."/>
            <person name="Vassarotti A."/>
            <person name="Viari A."/>
            <person name="Wambutt R."/>
            <person name="Wedler E."/>
            <person name="Wedler H."/>
            <person name="Weitzenegger T."/>
            <person name="Winters P."/>
            <person name="Wipat A."/>
            <person name="Yamamoto H."/>
            <person name="Yamane K."/>
            <person name="Yasumoto K."/>
            <person name="Yata K."/>
            <person name="Yoshida K."/>
            <person name="Yoshikawa H.-F."/>
            <person name="Zumstein E."/>
            <person name="Yoshikawa H."/>
            <person name="Danchin A."/>
        </authorList>
    </citation>
    <scope>NUCLEOTIDE SEQUENCE [LARGE SCALE GENOMIC DNA]</scope>
    <source>
        <strain>168</strain>
    </source>
</reference>
<reference key="3">
    <citation type="journal article" date="2009" name="J. Bacteriol.">
        <title>Regulation of the Bacillus subtilis divergent yetL and yetM genes by a transcriptional repressor, YetL, in response to flavonoids.</title>
        <authorList>
            <person name="Hirooka K."/>
            <person name="Danjo Y."/>
            <person name="Hanano Y."/>
            <person name="Kunikane S."/>
            <person name="Matsuoka H."/>
            <person name="Tojo S."/>
            <person name="Fujita Y."/>
        </authorList>
    </citation>
    <scope>TRANSCRIPTIONAL REGULATION</scope>
    <source>
        <strain>168</strain>
    </source>
</reference>
<proteinExistence type="evidence at transcript level"/>
<organism>
    <name type="scientific">Bacillus subtilis (strain 168)</name>
    <dbReference type="NCBI Taxonomy" id="224308"/>
    <lineage>
        <taxon>Bacteria</taxon>
        <taxon>Bacillati</taxon>
        <taxon>Bacillota</taxon>
        <taxon>Bacilli</taxon>
        <taxon>Bacillales</taxon>
        <taxon>Bacillaceae</taxon>
        <taxon>Bacillus</taxon>
    </lineage>
</organism>
<protein>
    <recommendedName>
        <fullName evidence="4">Putative FAD-dependent monooxygenase YetM</fullName>
        <ecNumber evidence="5">1.14.-.-</ecNumber>
    </recommendedName>
</protein>
<evidence type="ECO:0000250" key="1">
    <source>
        <dbReference type="UniProtKB" id="A6T923"/>
    </source>
</evidence>
<evidence type="ECO:0000255" key="2"/>
<evidence type="ECO:0000269" key="3">
    <source>
    </source>
</evidence>
<evidence type="ECO:0000303" key="4">
    <source>
    </source>
</evidence>
<evidence type="ECO:0000305" key="5"/>
<accession>O06489</accession>
<accession>Q797B5</accession>
<dbReference type="EC" id="1.14.-.-" evidence="5"/>
<dbReference type="EMBL" id="D87979">
    <property type="protein sequence ID" value="BAA20121.1"/>
    <property type="molecule type" value="Genomic_DNA"/>
</dbReference>
<dbReference type="EMBL" id="AL009126">
    <property type="protein sequence ID" value="CAB12542.1"/>
    <property type="molecule type" value="Genomic_DNA"/>
</dbReference>
<dbReference type="PIR" id="B69799">
    <property type="entry name" value="B69799"/>
</dbReference>
<dbReference type="RefSeq" id="WP_003243182.1">
    <property type="nucleotide sequence ID" value="NZ_OZ025638.1"/>
</dbReference>
<dbReference type="SMR" id="O06489"/>
<dbReference type="FunCoup" id="O06489">
    <property type="interactions" value="430"/>
</dbReference>
<dbReference type="STRING" id="224308.BSU07230"/>
<dbReference type="PaxDb" id="224308-BSU07230"/>
<dbReference type="DNASU" id="936090"/>
<dbReference type="EnsemblBacteria" id="CAB12542">
    <property type="protein sequence ID" value="CAB12542"/>
    <property type="gene ID" value="BSU_07230"/>
</dbReference>
<dbReference type="GeneID" id="936090"/>
<dbReference type="KEGG" id="bsu:BSU07230"/>
<dbReference type="PATRIC" id="fig|224308.179.peg.784"/>
<dbReference type="eggNOG" id="COG0654">
    <property type="taxonomic scope" value="Bacteria"/>
</dbReference>
<dbReference type="InParanoid" id="O06489"/>
<dbReference type="OrthoDB" id="9766816at2"/>
<dbReference type="PhylomeDB" id="O06489"/>
<dbReference type="BioCyc" id="BSUB:BSU07230-MONOMER"/>
<dbReference type="Proteomes" id="UP000001570">
    <property type="component" value="Chromosome"/>
</dbReference>
<dbReference type="GO" id="GO:0071949">
    <property type="term" value="F:FAD binding"/>
    <property type="evidence" value="ECO:0007669"/>
    <property type="project" value="InterPro"/>
</dbReference>
<dbReference type="GO" id="GO:0004497">
    <property type="term" value="F:monooxygenase activity"/>
    <property type="evidence" value="ECO:0000318"/>
    <property type="project" value="GO_Central"/>
</dbReference>
<dbReference type="Gene3D" id="3.50.50.60">
    <property type="entry name" value="FAD/NAD(P)-binding domain"/>
    <property type="match status" value="1"/>
</dbReference>
<dbReference type="InterPro" id="IPR002938">
    <property type="entry name" value="FAD-bd"/>
</dbReference>
<dbReference type="InterPro" id="IPR050493">
    <property type="entry name" value="FAD-dep_Monooxygenase_BioMet"/>
</dbReference>
<dbReference type="InterPro" id="IPR036188">
    <property type="entry name" value="FAD/NAD-bd_sf"/>
</dbReference>
<dbReference type="NCBIfam" id="NF005313">
    <property type="entry name" value="PRK06847.1"/>
    <property type="match status" value="1"/>
</dbReference>
<dbReference type="PANTHER" id="PTHR13789">
    <property type="entry name" value="MONOOXYGENASE"/>
    <property type="match status" value="1"/>
</dbReference>
<dbReference type="PANTHER" id="PTHR13789:SF309">
    <property type="entry name" value="PUTATIVE (AFU_ORTHOLOGUE AFUA_6G14510)-RELATED"/>
    <property type="match status" value="1"/>
</dbReference>
<dbReference type="Pfam" id="PF01494">
    <property type="entry name" value="FAD_binding_3"/>
    <property type="match status" value="1"/>
</dbReference>
<dbReference type="PRINTS" id="PR00420">
    <property type="entry name" value="RNGMNOXGNASE"/>
</dbReference>
<dbReference type="SUPFAM" id="SSF51905">
    <property type="entry name" value="FAD/NAD(P)-binding domain"/>
    <property type="match status" value="1"/>
</dbReference>